<accession>Q0V389</accession>
<name>RRP36_PHANO</name>
<organism>
    <name type="scientific">Phaeosphaeria nodorum (strain SN15 / ATCC MYA-4574 / FGSC 10173)</name>
    <name type="common">Glume blotch fungus</name>
    <name type="synonym">Parastagonospora nodorum</name>
    <dbReference type="NCBI Taxonomy" id="321614"/>
    <lineage>
        <taxon>Eukaryota</taxon>
        <taxon>Fungi</taxon>
        <taxon>Dikarya</taxon>
        <taxon>Ascomycota</taxon>
        <taxon>Pezizomycotina</taxon>
        <taxon>Dothideomycetes</taxon>
        <taxon>Pleosporomycetidae</taxon>
        <taxon>Pleosporales</taxon>
        <taxon>Pleosporineae</taxon>
        <taxon>Phaeosphaeriaceae</taxon>
        <taxon>Parastagonospora</taxon>
    </lineage>
</organism>
<evidence type="ECO:0000250" key="1"/>
<evidence type="ECO:0000255" key="2"/>
<evidence type="ECO:0000256" key="3">
    <source>
        <dbReference type="SAM" id="MobiDB-lite"/>
    </source>
</evidence>
<evidence type="ECO:0000305" key="4"/>
<proteinExistence type="inferred from homology"/>
<reference key="1">
    <citation type="journal article" date="2007" name="Plant Cell">
        <title>Dothideomycete-plant interactions illuminated by genome sequencing and EST analysis of the wheat pathogen Stagonospora nodorum.</title>
        <authorList>
            <person name="Hane J.K."/>
            <person name="Lowe R.G.T."/>
            <person name="Solomon P.S."/>
            <person name="Tan K.-C."/>
            <person name="Schoch C.L."/>
            <person name="Spatafora J.W."/>
            <person name="Crous P.W."/>
            <person name="Kodira C.D."/>
            <person name="Birren B.W."/>
            <person name="Galagan J.E."/>
            <person name="Torriani S.F.F."/>
            <person name="McDonald B.A."/>
            <person name="Oliver R.P."/>
        </authorList>
    </citation>
    <scope>NUCLEOTIDE SEQUENCE [LARGE SCALE GENOMIC DNA]</scope>
    <source>
        <strain>SN15 / ATCC MYA-4574 / FGSC 10173</strain>
    </source>
</reference>
<protein>
    <recommendedName>
        <fullName>rRNA biogenesis protein RRP36</fullName>
    </recommendedName>
    <alternativeName>
        <fullName>Ribosomal RNA-processing protein 36</fullName>
    </alternativeName>
</protein>
<gene>
    <name type="primary">RRP36</name>
    <name type="ORF">SNOG_01525</name>
</gene>
<feature type="chain" id="PRO_0000397649" description="rRNA biogenesis protein RRP36">
    <location>
        <begin position="1"/>
        <end position="331"/>
    </location>
</feature>
<feature type="region of interest" description="Disordered" evidence="3">
    <location>
        <begin position="1"/>
        <end position="207"/>
    </location>
</feature>
<feature type="region of interest" description="Disordered" evidence="3">
    <location>
        <begin position="247"/>
        <end position="272"/>
    </location>
</feature>
<feature type="region of interest" description="Disordered" evidence="3">
    <location>
        <begin position="303"/>
        <end position="331"/>
    </location>
</feature>
<feature type="coiled-coil region" evidence="2">
    <location>
        <begin position="82"/>
        <end position="112"/>
    </location>
</feature>
<feature type="coiled-coil region" evidence="2">
    <location>
        <begin position="218"/>
        <end position="277"/>
    </location>
</feature>
<feature type="compositionally biased region" description="Basic and acidic residues" evidence="3">
    <location>
        <begin position="1"/>
        <end position="15"/>
    </location>
</feature>
<feature type="compositionally biased region" description="Acidic residues" evidence="3">
    <location>
        <begin position="16"/>
        <end position="25"/>
    </location>
</feature>
<feature type="compositionally biased region" description="Polar residues" evidence="3">
    <location>
        <begin position="32"/>
        <end position="41"/>
    </location>
</feature>
<feature type="compositionally biased region" description="Basic and acidic residues" evidence="3">
    <location>
        <begin position="42"/>
        <end position="53"/>
    </location>
</feature>
<feature type="compositionally biased region" description="Basic and acidic residues" evidence="3">
    <location>
        <begin position="83"/>
        <end position="109"/>
    </location>
</feature>
<feature type="compositionally biased region" description="Basic and acidic residues" evidence="3">
    <location>
        <begin position="122"/>
        <end position="133"/>
    </location>
</feature>
<feature type="compositionally biased region" description="Acidic residues" evidence="3">
    <location>
        <begin position="134"/>
        <end position="151"/>
    </location>
</feature>
<feature type="compositionally biased region" description="Basic and acidic residues" evidence="3">
    <location>
        <begin position="180"/>
        <end position="193"/>
    </location>
</feature>
<feature type="compositionally biased region" description="Basic and acidic residues" evidence="3">
    <location>
        <begin position="251"/>
        <end position="272"/>
    </location>
</feature>
<feature type="compositionally biased region" description="Basic and acidic residues" evidence="3">
    <location>
        <begin position="318"/>
        <end position="331"/>
    </location>
</feature>
<dbReference type="EMBL" id="CH445326">
    <property type="protein sequence ID" value="EAT91174.2"/>
    <property type="molecule type" value="Genomic_DNA"/>
</dbReference>
<dbReference type="RefSeq" id="XP_001792163.1">
    <property type="nucleotide sequence ID" value="XM_001792111.1"/>
</dbReference>
<dbReference type="SMR" id="Q0V389"/>
<dbReference type="FunCoup" id="Q0V389">
    <property type="interactions" value="508"/>
</dbReference>
<dbReference type="STRING" id="321614.Q0V389"/>
<dbReference type="EnsemblFungi" id="SNOT_01525">
    <property type="protein sequence ID" value="SNOT_01525"/>
    <property type="gene ID" value="SNOG_01525"/>
</dbReference>
<dbReference type="GeneID" id="5969008"/>
<dbReference type="KEGG" id="pno:SNOG_01525"/>
<dbReference type="VEuPathDB" id="FungiDB:JI435_015250"/>
<dbReference type="eggNOG" id="KOG3190">
    <property type="taxonomic scope" value="Eukaryota"/>
</dbReference>
<dbReference type="HOGENOM" id="CLU_048802_0_1_1"/>
<dbReference type="InParanoid" id="Q0V389"/>
<dbReference type="Proteomes" id="UP000001055">
    <property type="component" value="Unassembled WGS sequence"/>
</dbReference>
<dbReference type="GO" id="GO:0030686">
    <property type="term" value="C:90S preribosome"/>
    <property type="evidence" value="ECO:0000318"/>
    <property type="project" value="GO_Central"/>
</dbReference>
<dbReference type="GO" id="GO:0005730">
    <property type="term" value="C:nucleolus"/>
    <property type="evidence" value="ECO:0000318"/>
    <property type="project" value="GO_Central"/>
</dbReference>
<dbReference type="GO" id="GO:0000462">
    <property type="term" value="P:maturation of SSU-rRNA from tricistronic rRNA transcript (SSU-rRNA, 5.8S rRNA, LSU-rRNA)"/>
    <property type="evidence" value="ECO:0000318"/>
    <property type="project" value="GO_Central"/>
</dbReference>
<dbReference type="InterPro" id="IPR009292">
    <property type="entry name" value="RRP36"/>
</dbReference>
<dbReference type="PANTHER" id="PTHR21738">
    <property type="entry name" value="RIBOSOMAL RNA PROCESSING PROTEIN 36 HOMOLOG"/>
    <property type="match status" value="1"/>
</dbReference>
<dbReference type="PANTHER" id="PTHR21738:SF0">
    <property type="entry name" value="RIBOSOMAL RNA PROCESSING PROTEIN 36 HOMOLOG"/>
    <property type="match status" value="1"/>
</dbReference>
<dbReference type="Pfam" id="PF06102">
    <property type="entry name" value="RRP36"/>
    <property type="match status" value="1"/>
</dbReference>
<comment type="function">
    <text evidence="1">Component of the 90S pre-ribosome involved in the maturation of rRNAs. Required for early cleavages of the pre-RNAs in the 40S ribosomal subunit maturation pathway (By similarity).</text>
</comment>
<comment type="subunit">
    <text evidence="1">Associates with 90S and pre-40S pre-ribosomal particles.</text>
</comment>
<comment type="subcellular location">
    <subcellularLocation>
        <location evidence="1">Nucleus</location>
        <location evidence="1">Nucleolus</location>
    </subcellularLocation>
</comment>
<comment type="similarity">
    <text evidence="4">Belongs to the RRP36 family.</text>
</comment>
<sequence length="331" mass="38030">MPLAEKLDRKLRPADDSSDGEDYYEVTDRSSSESILETANANKDDASDDERVKSQMSKVSFGALAKAQDALSKQQSADRKRKRGEDTSKSQDDKLEALRERLRQIKAEKMANGAAGAKPKKKSEGTKKGKVIQDEDDEDDDEEDVDSDNSDTEAAPKARSSKHAPMVQSSKRMVSRKRKVVDVKKPVFRDPRFDNMGGAAPDDNTLGNRYSFLNDYRASEIAELRRTIKKSKNEGEKERLKKQLLSMESQQKARENKEKHQEVIREHKKKEKELVKQGKQPFFLKKSEQKKLALIDRFQNMKSKQLDKVIERRRKKVTSKERRNMPERRTA</sequence>
<keyword id="KW-0175">Coiled coil</keyword>
<keyword id="KW-0539">Nucleus</keyword>
<keyword id="KW-0687">Ribonucleoprotein</keyword>
<keyword id="KW-0690">Ribosome biogenesis</keyword>
<keyword id="KW-0698">rRNA processing</keyword>